<feature type="chain" id="PRO_0000314547" description="Ribosomal RNA large subunit methyltransferase M">
    <location>
        <begin position="1"/>
        <end position="366"/>
    </location>
</feature>
<feature type="active site" description="Proton acceptor" evidence="1">
    <location>
        <position position="306"/>
    </location>
</feature>
<feature type="binding site" evidence="1">
    <location>
        <position position="188"/>
    </location>
    <ligand>
        <name>S-adenosyl-L-methionine</name>
        <dbReference type="ChEBI" id="CHEBI:59789"/>
    </ligand>
</feature>
<feature type="binding site" evidence="1">
    <location>
        <begin position="221"/>
        <end position="224"/>
    </location>
    <ligand>
        <name>S-adenosyl-L-methionine</name>
        <dbReference type="ChEBI" id="CHEBI:59789"/>
    </ligand>
</feature>
<feature type="binding site" evidence="1">
    <location>
        <position position="240"/>
    </location>
    <ligand>
        <name>S-adenosyl-L-methionine</name>
        <dbReference type="ChEBI" id="CHEBI:59789"/>
    </ligand>
</feature>
<feature type="binding site" evidence="1">
    <location>
        <position position="260"/>
    </location>
    <ligand>
        <name>S-adenosyl-L-methionine</name>
        <dbReference type="ChEBI" id="CHEBI:59789"/>
    </ligand>
</feature>
<feature type="binding site" evidence="1">
    <location>
        <position position="277"/>
    </location>
    <ligand>
        <name>S-adenosyl-L-methionine</name>
        <dbReference type="ChEBI" id="CHEBI:59789"/>
    </ligand>
</feature>
<proteinExistence type="inferred from homology"/>
<sequence>MNNVILYCRPGFEKECSAEVTEKAAAREIFGFARVKDNSGYVVFVCYQHEEADRLVRVLPLRSLIFARQMILVGELLRDLPAEDRITQIAGMLTGAVAGAGEVRVEVPDTNESKELMKFCRKLTVPLRAALRAQRILKGEEHRSPQVIHVLFIAPGCCYAGYSYRDNHSPFYMGIPRLRFPPDAPSRSMLKLEEAFHVFIPADEWDERLGSGMYAVDLGACPGGWTYQLVKRSMMVHAVDNGTMDEALMATGQVIHHRADGFRFEPPRNNVYWLVCDMVEKPSRVAQLAADWLVKGWCREAIFNLKLPMKKRYEEVSQNLRLLIDHLQVNGVHGEVHAKQLYHDREEVTVHARRFWSAVPGRRDER</sequence>
<reference key="1">
    <citation type="journal article" date="2006" name="Genome Res.">
        <title>Massive genome erosion and functional adaptations provide insights into the symbiotic lifestyle of Sodalis glossinidius in the tsetse host.</title>
        <authorList>
            <person name="Toh H."/>
            <person name="Weiss B.L."/>
            <person name="Perkin S.A.H."/>
            <person name="Yamashita A."/>
            <person name="Oshima K."/>
            <person name="Hattori M."/>
            <person name="Aksoy S."/>
        </authorList>
    </citation>
    <scope>NUCLEOTIDE SEQUENCE [LARGE SCALE GENOMIC DNA]</scope>
    <source>
        <strain>morsitans</strain>
    </source>
</reference>
<accession>Q2NRJ6</accession>
<protein>
    <recommendedName>
        <fullName evidence="1">Ribosomal RNA large subunit methyltransferase M</fullName>
        <ecNumber evidence="1">2.1.1.186</ecNumber>
    </recommendedName>
    <alternativeName>
        <fullName evidence="1">23S rRNA (cytidine2498-2'-O)-methyltransferase</fullName>
    </alternativeName>
    <alternativeName>
        <fullName evidence="1">23S rRNA 2'-O-ribose methyltransferase RlmM</fullName>
    </alternativeName>
</protein>
<organism>
    <name type="scientific">Sodalis glossinidius (strain morsitans)</name>
    <dbReference type="NCBI Taxonomy" id="343509"/>
    <lineage>
        <taxon>Bacteria</taxon>
        <taxon>Pseudomonadati</taxon>
        <taxon>Pseudomonadota</taxon>
        <taxon>Gammaproteobacteria</taxon>
        <taxon>Enterobacterales</taxon>
        <taxon>Bruguierivoracaceae</taxon>
        <taxon>Sodalis</taxon>
    </lineage>
</organism>
<evidence type="ECO:0000255" key="1">
    <source>
        <dbReference type="HAMAP-Rule" id="MF_01551"/>
    </source>
</evidence>
<gene>
    <name evidence="1" type="primary">rlmM</name>
    <name type="ordered locus">SG1954</name>
</gene>
<name>RLMM_SODGM</name>
<keyword id="KW-0963">Cytoplasm</keyword>
<keyword id="KW-0489">Methyltransferase</keyword>
<keyword id="KW-0698">rRNA processing</keyword>
<keyword id="KW-0949">S-adenosyl-L-methionine</keyword>
<keyword id="KW-0808">Transferase</keyword>
<comment type="function">
    <text evidence="1">Catalyzes the 2'-O-methylation at nucleotide C2498 in 23S rRNA.</text>
</comment>
<comment type="catalytic activity">
    <reaction evidence="1">
        <text>cytidine(2498) in 23S rRNA + S-adenosyl-L-methionine = 2'-O-methylcytidine(2498) in 23S rRNA + S-adenosyl-L-homocysteine + H(+)</text>
        <dbReference type="Rhea" id="RHEA:42788"/>
        <dbReference type="Rhea" id="RHEA-COMP:10244"/>
        <dbReference type="Rhea" id="RHEA-COMP:10245"/>
        <dbReference type="ChEBI" id="CHEBI:15378"/>
        <dbReference type="ChEBI" id="CHEBI:57856"/>
        <dbReference type="ChEBI" id="CHEBI:59789"/>
        <dbReference type="ChEBI" id="CHEBI:74495"/>
        <dbReference type="ChEBI" id="CHEBI:82748"/>
        <dbReference type="EC" id="2.1.1.186"/>
    </reaction>
</comment>
<comment type="subunit">
    <text evidence="1">Monomer.</text>
</comment>
<comment type="subcellular location">
    <subcellularLocation>
        <location evidence="1">Cytoplasm</location>
    </subcellularLocation>
</comment>
<comment type="similarity">
    <text evidence="1">Belongs to the class I-like SAM-binding methyltransferase superfamily. RNA methyltransferase RlmE family. RlmM subfamily.</text>
</comment>
<dbReference type="EC" id="2.1.1.186" evidence="1"/>
<dbReference type="EMBL" id="AP008232">
    <property type="protein sequence ID" value="BAE75229.1"/>
    <property type="molecule type" value="Genomic_DNA"/>
</dbReference>
<dbReference type="RefSeq" id="WP_011411685.1">
    <property type="nucleotide sequence ID" value="NC_007712.1"/>
</dbReference>
<dbReference type="SMR" id="Q2NRJ6"/>
<dbReference type="STRING" id="343509.SG1954"/>
<dbReference type="KEGG" id="sgl:SG1954"/>
<dbReference type="eggNOG" id="COG2933">
    <property type="taxonomic scope" value="Bacteria"/>
</dbReference>
<dbReference type="HOGENOM" id="CLU_043780_0_0_6"/>
<dbReference type="OrthoDB" id="154490at2"/>
<dbReference type="BioCyc" id="SGLO343509:SGP1_RS17905-MONOMER"/>
<dbReference type="Proteomes" id="UP000001932">
    <property type="component" value="Chromosome"/>
</dbReference>
<dbReference type="GO" id="GO:0005737">
    <property type="term" value="C:cytoplasm"/>
    <property type="evidence" value="ECO:0007669"/>
    <property type="project" value="UniProtKB-SubCell"/>
</dbReference>
<dbReference type="GO" id="GO:0008757">
    <property type="term" value="F:S-adenosylmethionine-dependent methyltransferase activity"/>
    <property type="evidence" value="ECO:0007669"/>
    <property type="project" value="UniProtKB-UniRule"/>
</dbReference>
<dbReference type="GO" id="GO:0032259">
    <property type="term" value="P:methylation"/>
    <property type="evidence" value="ECO:0007669"/>
    <property type="project" value="UniProtKB-KW"/>
</dbReference>
<dbReference type="GO" id="GO:0006364">
    <property type="term" value="P:rRNA processing"/>
    <property type="evidence" value="ECO:0007669"/>
    <property type="project" value="UniProtKB-UniRule"/>
</dbReference>
<dbReference type="Gene3D" id="3.30.2300.20">
    <property type="match status" value="1"/>
</dbReference>
<dbReference type="Gene3D" id="3.30.70.2810">
    <property type="match status" value="1"/>
</dbReference>
<dbReference type="Gene3D" id="3.40.50.150">
    <property type="entry name" value="Vaccinia Virus protein VP39"/>
    <property type="match status" value="1"/>
</dbReference>
<dbReference type="HAMAP" id="MF_01551">
    <property type="entry name" value="23SrRNA_methyltr_M"/>
    <property type="match status" value="1"/>
</dbReference>
<dbReference type="InterPro" id="IPR040739">
    <property type="entry name" value="RlmM_FDX"/>
</dbReference>
<dbReference type="InterPro" id="IPR048646">
    <property type="entry name" value="RlmM_THUMP-like"/>
</dbReference>
<dbReference type="InterPro" id="IPR002877">
    <property type="entry name" value="RNA_MeTrfase_FtsJ_dom"/>
</dbReference>
<dbReference type="InterPro" id="IPR011224">
    <property type="entry name" value="rRNA_MeTrfase_M"/>
</dbReference>
<dbReference type="InterPro" id="IPR029063">
    <property type="entry name" value="SAM-dependent_MTases_sf"/>
</dbReference>
<dbReference type="NCBIfam" id="NF008734">
    <property type="entry name" value="PRK11760.1"/>
    <property type="match status" value="1"/>
</dbReference>
<dbReference type="PANTHER" id="PTHR37524">
    <property type="entry name" value="RIBOSOMAL RNA LARGE SUBUNIT METHYLTRANSFERASE M"/>
    <property type="match status" value="1"/>
</dbReference>
<dbReference type="PANTHER" id="PTHR37524:SF2">
    <property type="entry name" value="RIBOSOMAL RNA METHYLTRANSFERASE FTSJ DOMAIN-CONTAINING PROTEIN"/>
    <property type="match status" value="1"/>
</dbReference>
<dbReference type="Pfam" id="PF01728">
    <property type="entry name" value="FtsJ"/>
    <property type="match status" value="1"/>
</dbReference>
<dbReference type="Pfam" id="PF18125">
    <property type="entry name" value="RlmM_FDX"/>
    <property type="match status" value="1"/>
</dbReference>
<dbReference type="Pfam" id="PF21239">
    <property type="entry name" value="RLMM_N"/>
    <property type="match status" value="1"/>
</dbReference>
<dbReference type="PIRSF" id="PIRSF028774">
    <property type="entry name" value="UCP028774"/>
    <property type="match status" value="1"/>
</dbReference>
<dbReference type="SUPFAM" id="SSF53335">
    <property type="entry name" value="S-adenosyl-L-methionine-dependent methyltransferases"/>
    <property type="match status" value="1"/>
</dbReference>